<organism>
    <name type="scientific">Arabidopsis thaliana</name>
    <name type="common">Mouse-ear cress</name>
    <dbReference type="NCBI Taxonomy" id="3702"/>
    <lineage>
        <taxon>Eukaryota</taxon>
        <taxon>Viridiplantae</taxon>
        <taxon>Streptophyta</taxon>
        <taxon>Embryophyta</taxon>
        <taxon>Tracheophyta</taxon>
        <taxon>Spermatophyta</taxon>
        <taxon>Magnoliopsida</taxon>
        <taxon>eudicotyledons</taxon>
        <taxon>Gunneridae</taxon>
        <taxon>Pentapetalae</taxon>
        <taxon>rosids</taxon>
        <taxon>malvids</taxon>
        <taxon>Brassicales</taxon>
        <taxon>Brassicaceae</taxon>
        <taxon>Camelineae</taxon>
        <taxon>Arabidopsis</taxon>
    </lineage>
</organism>
<evidence type="ECO:0000250" key="1"/>
<evidence type="ECO:0000255" key="2"/>
<evidence type="ECO:0000269" key="3">
    <source>
    </source>
</evidence>
<evidence type="ECO:0000269" key="4">
    <source>
    </source>
</evidence>
<evidence type="ECO:0000305" key="5"/>
<gene>
    <name type="primary">RIBA3</name>
    <name type="ordered locus">At5g59750</name>
    <name type="ORF">MTH12.13</name>
    <name type="ORF">MTH12.150</name>
</gene>
<proteinExistence type="evidence at protein level"/>
<name>RIBA3_ARATH</name>
<protein>
    <recommendedName>
        <fullName>Monofunctional riboflavin biosynthesis protein RIBA 3, chloroplastic</fullName>
    </recommendedName>
    <domain>
        <recommendedName>
            <fullName>Inactive 3,4-dihydroxy-2-butanone 4-phosphate synthase</fullName>
            <shortName>DHBP synthase</shortName>
        </recommendedName>
    </domain>
    <domain>
        <recommendedName>
            <fullName>GTP cyclohydrolase-2</fullName>
            <ecNumber>3.5.4.25</ecNumber>
        </recommendedName>
        <alternativeName>
            <fullName>GTP cyclohydrolase II</fullName>
        </alternativeName>
    </domain>
</protein>
<dbReference type="EC" id="3.5.4.25"/>
<dbReference type="EMBL" id="AB006705">
    <property type="protein sequence ID" value="BAB09512.1"/>
    <property type="molecule type" value="Genomic_DNA"/>
</dbReference>
<dbReference type="EMBL" id="CP002688">
    <property type="protein sequence ID" value="AED97227.1"/>
    <property type="molecule type" value="Genomic_DNA"/>
</dbReference>
<dbReference type="EMBL" id="AF361835">
    <property type="protein sequence ID" value="AAK32847.1"/>
    <property type="molecule type" value="mRNA"/>
</dbReference>
<dbReference type="EMBL" id="AY050405">
    <property type="protein sequence ID" value="AAK91421.1"/>
    <property type="molecule type" value="mRNA"/>
</dbReference>
<dbReference type="EMBL" id="BT002730">
    <property type="protein sequence ID" value="AAO11646.1"/>
    <property type="molecule type" value="mRNA"/>
</dbReference>
<dbReference type="RefSeq" id="NP_568913.1">
    <molecule id="Q9FN89-1"/>
    <property type="nucleotide sequence ID" value="NM_125367.6"/>
</dbReference>
<dbReference type="SMR" id="Q9FN89"/>
<dbReference type="FunCoup" id="Q9FN89">
    <property type="interactions" value="611"/>
</dbReference>
<dbReference type="STRING" id="3702.Q9FN89"/>
<dbReference type="PaxDb" id="3702-AT5G59750.2"/>
<dbReference type="ProteomicsDB" id="234693">
    <molecule id="Q9FN89-1"/>
</dbReference>
<dbReference type="EnsemblPlants" id="AT5G59750.1">
    <molecule id="Q9FN89-1"/>
    <property type="protein sequence ID" value="AT5G59750.1"/>
    <property type="gene ID" value="AT5G59750"/>
</dbReference>
<dbReference type="GeneID" id="836096"/>
<dbReference type="Gramene" id="AT5G59750.1">
    <molecule id="Q9FN89-1"/>
    <property type="protein sequence ID" value="AT5G59750.1"/>
    <property type="gene ID" value="AT5G59750"/>
</dbReference>
<dbReference type="KEGG" id="ath:AT5G59750"/>
<dbReference type="Araport" id="AT5G59750"/>
<dbReference type="TAIR" id="AT5G59750">
    <property type="gene designation" value="RIBA3"/>
</dbReference>
<dbReference type="eggNOG" id="KOG1284">
    <property type="taxonomic scope" value="Eukaryota"/>
</dbReference>
<dbReference type="InParanoid" id="Q9FN89"/>
<dbReference type="OMA" id="ECRGLIC"/>
<dbReference type="OrthoDB" id="60371at2759"/>
<dbReference type="PhylomeDB" id="Q9FN89"/>
<dbReference type="BioCyc" id="ARA:AT5G59750-MONOMER"/>
<dbReference type="UniPathway" id="UPA00275">
    <property type="reaction ID" value="UER00400"/>
</dbReference>
<dbReference type="PRO" id="PR:Q9FN89"/>
<dbReference type="Proteomes" id="UP000006548">
    <property type="component" value="Chromosome 5"/>
</dbReference>
<dbReference type="ExpressionAtlas" id="Q9FN89">
    <property type="expression patterns" value="baseline and differential"/>
</dbReference>
<dbReference type="GO" id="GO:0009507">
    <property type="term" value="C:chloroplast"/>
    <property type="evidence" value="ECO:0007669"/>
    <property type="project" value="UniProtKB-SubCell"/>
</dbReference>
<dbReference type="GO" id="GO:0008686">
    <property type="term" value="F:3,4-dihydroxy-2-butanone-4-phosphate synthase activity"/>
    <property type="evidence" value="ECO:0007669"/>
    <property type="project" value="InterPro"/>
</dbReference>
<dbReference type="GO" id="GO:0005525">
    <property type="term" value="F:GTP binding"/>
    <property type="evidence" value="ECO:0007669"/>
    <property type="project" value="UniProtKB-KW"/>
</dbReference>
<dbReference type="GO" id="GO:0003935">
    <property type="term" value="F:GTP cyclohydrolase II activity"/>
    <property type="evidence" value="ECO:0007669"/>
    <property type="project" value="UniProtKB-EC"/>
</dbReference>
<dbReference type="GO" id="GO:0046872">
    <property type="term" value="F:metal ion binding"/>
    <property type="evidence" value="ECO:0007669"/>
    <property type="project" value="UniProtKB-KW"/>
</dbReference>
<dbReference type="GO" id="GO:0009231">
    <property type="term" value="P:riboflavin biosynthetic process"/>
    <property type="evidence" value="ECO:0007669"/>
    <property type="project" value="UniProtKB-UniPathway"/>
</dbReference>
<dbReference type="CDD" id="cd00641">
    <property type="entry name" value="GTP_cyclohydro2"/>
    <property type="match status" value="1"/>
</dbReference>
<dbReference type="FunFam" id="3.90.870.10:FF:000005">
    <property type="entry name" value="Bifunctional riboflavin biosynthesis protein RIBA 1 chloroplastic"/>
    <property type="match status" value="1"/>
</dbReference>
<dbReference type="FunFam" id="3.40.50.10990:FF:000001">
    <property type="entry name" value="Riboflavin biosynthesis protein RibBA"/>
    <property type="match status" value="1"/>
</dbReference>
<dbReference type="Gene3D" id="3.90.870.10">
    <property type="entry name" value="DHBP synthase"/>
    <property type="match status" value="1"/>
</dbReference>
<dbReference type="Gene3D" id="3.40.50.10990">
    <property type="entry name" value="GTP cyclohydrolase II"/>
    <property type="match status" value="1"/>
</dbReference>
<dbReference type="HAMAP" id="MF_00179">
    <property type="entry name" value="RibA"/>
    <property type="match status" value="1"/>
</dbReference>
<dbReference type="HAMAP" id="MF_01283">
    <property type="entry name" value="RibBA"/>
    <property type="match status" value="1"/>
</dbReference>
<dbReference type="InterPro" id="IPR017945">
    <property type="entry name" value="DHBP_synth_RibB-like_a/b_dom"/>
</dbReference>
<dbReference type="InterPro" id="IPR000422">
    <property type="entry name" value="DHBP_synthase_RibB"/>
</dbReference>
<dbReference type="InterPro" id="IPR032677">
    <property type="entry name" value="GTP_cyclohydro_II"/>
</dbReference>
<dbReference type="InterPro" id="IPR000926">
    <property type="entry name" value="RibA"/>
</dbReference>
<dbReference type="InterPro" id="IPR036144">
    <property type="entry name" value="RibA-like_sf"/>
</dbReference>
<dbReference type="InterPro" id="IPR016299">
    <property type="entry name" value="Riboflavin_synth_RibBA"/>
</dbReference>
<dbReference type="NCBIfam" id="NF001591">
    <property type="entry name" value="PRK00393.1"/>
    <property type="match status" value="1"/>
</dbReference>
<dbReference type="NCBIfam" id="NF006803">
    <property type="entry name" value="PRK09311.1"/>
    <property type="match status" value="1"/>
</dbReference>
<dbReference type="NCBIfam" id="TIGR00505">
    <property type="entry name" value="ribA"/>
    <property type="match status" value="1"/>
</dbReference>
<dbReference type="NCBIfam" id="TIGR00506">
    <property type="entry name" value="ribB"/>
    <property type="match status" value="1"/>
</dbReference>
<dbReference type="PANTHER" id="PTHR21327">
    <property type="entry name" value="GTP CYCLOHYDROLASE II-RELATED"/>
    <property type="match status" value="1"/>
</dbReference>
<dbReference type="PANTHER" id="PTHR21327:SF29">
    <property type="entry name" value="GTP CYCLOHYDROLASE-2"/>
    <property type="match status" value="1"/>
</dbReference>
<dbReference type="Pfam" id="PF00926">
    <property type="entry name" value="DHBP_synthase"/>
    <property type="match status" value="1"/>
</dbReference>
<dbReference type="Pfam" id="PF00925">
    <property type="entry name" value="GTP_cyclohydro2"/>
    <property type="match status" value="1"/>
</dbReference>
<dbReference type="SUPFAM" id="SSF142695">
    <property type="entry name" value="RibA-like"/>
    <property type="match status" value="1"/>
</dbReference>
<dbReference type="SUPFAM" id="SSF55821">
    <property type="entry name" value="YrdC/RibB"/>
    <property type="match status" value="1"/>
</dbReference>
<reference key="1">
    <citation type="journal article" date="1997" name="DNA Res.">
        <title>Structural analysis of Arabidopsis thaliana chromosome 5. II. Sequence features of the regions of 1,044,062 bp covered by thirteen physically assigned P1 clones.</title>
        <authorList>
            <person name="Kotani H."/>
            <person name="Nakamura Y."/>
            <person name="Sato S."/>
            <person name="Kaneko T."/>
            <person name="Asamizu E."/>
            <person name="Miyajima N."/>
            <person name="Tabata S."/>
        </authorList>
    </citation>
    <scope>NUCLEOTIDE SEQUENCE [LARGE SCALE GENOMIC DNA]</scope>
    <source>
        <strain>cv. Columbia</strain>
    </source>
</reference>
<reference key="2">
    <citation type="journal article" date="2017" name="Plant J.">
        <title>Araport11: a complete reannotation of the Arabidopsis thaliana reference genome.</title>
        <authorList>
            <person name="Cheng C.Y."/>
            <person name="Krishnakumar V."/>
            <person name="Chan A.P."/>
            <person name="Thibaud-Nissen F."/>
            <person name="Schobel S."/>
            <person name="Town C.D."/>
        </authorList>
    </citation>
    <scope>GENOME REANNOTATION</scope>
    <source>
        <strain>cv. Columbia</strain>
    </source>
</reference>
<reference key="3">
    <citation type="journal article" date="2003" name="Science">
        <title>Empirical analysis of transcriptional activity in the Arabidopsis genome.</title>
        <authorList>
            <person name="Yamada K."/>
            <person name="Lim J."/>
            <person name="Dale J.M."/>
            <person name="Chen H."/>
            <person name="Shinn P."/>
            <person name="Palm C.J."/>
            <person name="Southwick A.M."/>
            <person name="Wu H.C."/>
            <person name="Kim C.J."/>
            <person name="Nguyen M."/>
            <person name="Pham P.K."/>
            <person name="Cheuk R.F."/>
            <person name="Karlin-Newmann G."/>
            <person name="Liu S.X."/>
            <person name="Lam B."/>
            <person name="Sakano H."/>
            <person name="Wu T."/>
            <person name="Yu G."/>
            <person name="Miranda M."/>
            <person name="Quach H.L."/>
            <person name="Tripp M."/>
            <person name="Chang C.H."/>
            <person name="Lee J.M."/>
            <person name="Toriumi M.J."/>
            <person name="Chan M.M."/>
            <person name="Tang C.C."/>
            <person name="Onodera C.S."/>
            <person name="Deng J.M."/>
            <person name="Akiyama K."/>
            <person name="Ansari Y."/>
            <person name="Arakawa T."/>
            <person name="Banh J."/>
            <person name="Banno F."/>
            <person name="Bowser L."/>
            <person name="Brooks S.Y."/>
            <person name="Carninci P."/>
            <person name="Chao Q."/>
            <person name="Choy N."/>
            <person name="Enju A."/>
            <person name="Goldsmith A.D."/>
            <person name="Gurjal M."/>
            <person name="Hansen N.F."/>
            <person name="Hayashizaki Y."/>
            <person name="Johnson-Hopson C."/>
            <person name="Hsuan V.W."/>
            <person name="Iida K."/>
            <person name="Karnes M."/>
            <person name="Khan S."/>
            <person name="Koesema E."/>
            <person name="Ishida J."/>
            <person name="Jiang P.X."/>
            <person name="Jones T."/>
            <person name="Kawai J."/>
            <person name="Kamiya A."/>
            <person name="Meyers C."/>
            <person name="Nakajima M."/>
            <person name="Narusaka M."/>
            <person name="Seki M."/>
            <person name="Sakurai T."/>
            <person name="Satou M."/>
            <person name="Tamse R."/>
            <person name="Vaysberg M."/>
            <person name="Wallender E.K."/>
            <person name="Wong C."/>
            <person name="Yamamura Y."/>
            <person name="Yuan S."/>
            <person name="Shinozaki K."/>
            <person name="Davis R.W."/>
            <person name="Theologis A."/>
            <person name="Ecker J.R."/>
        </authorList>
    </citation>
    <scope>NUCLEOTIDE SEQUENCE [LARGE SCALE MRNA]</scope>
    <source>
        <strain>cv. Columbia</strain>
    </source>
</reference>
<reference key="4">
    <citation type="journal article" date="2012" name="Int. J. Mol. Sci.">
        <title>Arabidopsis RIBA Proteins: two out of three isoforms have lost their bifunctional activity in riboflavin biosynthesis.</title>
        <authorList>
            <person name="Hiltunen H.M."/>
            <person name="Illarionov B."/>
            <person name="Hedtke B."/>
            <person name="Fischer M."/>
            <person name="Grimm B."/>
        </authorList>
    </citation>
    <scope>FUNCTION</scope>
    <scope>CATALYTIC ACTIVITY</scope>
    <scope>TISSUE SPECIFICITY</scope>
    <scope>SUBCELLULAR LOCATION</scope>
</reference>
<reference key="5">
    <citation type="journal article" date="2012" name="Plant Mol. Biol.">
        <title>Deficiency in riboflavin biosynthesis affects tetrapyrrole biosynthesis in etiolated Arabidopsis tissue.</title>
        <authorList>
            <person name="Hedtke B."/>
            <person name="Alawady A."/>
            <person name="Albacete A."/>
            <person name="Kobayashi K."/>
            <person name="Melzer M."/>
            <person name="Roitsch T."/>
            <person name="Masuda T."/>
            <person name="Grimm B."/>
        </authorList>
    </citation>
    <scope>FUNCTION</scope>
</reference>
<feature type="transit peptide" description="Chloroplast" evidence="2">
    <location>
        <begin position="1"/>
        <end position="43"/>
    </location>
</feature>
<feature type="chain" id="PRO_0000422709" description="Monofunctional riboflavin biosynthesis protein RIBA 3, chloroplastic">
    <location>
        <begin position="44"/>
        <end position="509"/>
    </location>
</feature>
<feature type="region of interest" description="Inactive DHBP synthase">
    <location>
        <begin position="44"/>
        <end position="302"/>
    </location>
</feature>
<feature type="region of interest" description="GTP cyclohydrolase II">
    <location>
        <begin position="303"/>
        <end position="509"/>
    </location>
</feature>
<feature type="active site" description="Proton acceptor; for GTP cyclohydrolase activity" evidence="2">
    <location>
        <position position="431"/>
    </location>
</feature>
<feature type="active site" description="Nucleophile; for GTP cyclohydrolase activity" evidence="1">
    <location>
        <position position="433"/>
    </location>
</feature>
<feature type="binding site" evidence="1">
    <location>
        <begin position="125"/>
        <end position="126"/>
    </location>
    <ligand>
        <name>D-ribulose 5-phosphate</name>
        <dbReference type="ChEBI" id="CHEBI:58121"/>
    </ligand>
</feature>
<feature type="binding site" evidence="1">
    <location>
        <begin position="240"/>
        <end position="244"/>
    </location>
    <ligand>
        <name>D-ribulose 5-phosphate</name>
        <dbReference type="ChEBI" id="CHEBI:58121"/>
    </ligand>
</feature>
<feature type="binding site" evidence="1">
    <location>
        <begin position="353"/>
        <end position="357"/>
    </location>
    <ligand>
        <name>GTP</name>
        <dbReference type="ChEBI" id="CHEBI:37565"/>
    </ligand>
</feature>
<feature type="binding site" evidence="1">
    <location>
        <position position="358"/>
    </location>
    <ligand>
        <name>Zn(2+)</name>
        <dbReference type="ChEBI" id="CHEBI:29105"/>
        <note>catalytic</note>
    </ligand>
</feature>
<feature type="binding site" evidence="1">
    <location>
        <position position="369"/>
    </location>
    <ligand>
        <name>Zn(2+)</name>
        <dbReference type="ChEBI" id="CHEBI:29105"/>
        <note>catalytic</note>
    </ligand>
</feature>
<feature type="binding site" evidence="1">
    <location>
        <position position="371"/>
    </location>
    <ligand>
        <name>Zn(2+)</name>
        <dbReference type="ChEBI" id="CHEBI:29105"/>
        <note>catalytic</note>
    </ligand>
</feature>
<feature type="binding site" evidence="1">
    <location>
        <position position="374"/>
    </location>
    <ligand>
        <name>GTP</name>
        <dbReference type="ChEBI" id="CHEBI:37565"/>
    </ligand>
</feature>
<feature type="binding site" evidence="1">
    <location>
        <begin position="397"/>
        <end position="399"/>
    </location>
    <ligand>
        <name>GTP</name>
        <dbReference type="ChEBI" id="CHEBI:37565"/>
    </ligand>
</feature>
<feature type="binding site" evidence="1">
    <location>
        <position position="419"/>
    </location>
    <ligand>
        <name>GTP</name>
        <dbReference type="ChEBI" id="CHEBI:37565"/>
    </ligand>
</feature>
<feature type="binding site" evidence="1">
    <location>
        <position position="454"/>
    </location>
    <ligand>
        <name>GTP</name>
        <dbReference type="ChEBI" id="CHEBI:37565"/>
    </ligand>
</feature>
<feature type="binding site" evidence="1">
    <location>
        <position position="459"/>
    </location>
    <ligand>
        <name>GTP</name>
        <dbReference type="ChEBI" id="CHEBI:37565"/>
    </ligand>
</feature>
<accession>Q9FN89</accession>
<comment type="function">
    <text evidence="3 4">Involved in riboflavin biosynthesis. Catalyzes the conversion of GTP to 2,5-diamino-6-ribosylamino-4(3H)-pyrimidinone 5'-phosphate (DARP), formate and pyrophosphate. RIBA2 and RIBA3 together are not able to complement the loss of function of RIBA1.</text>
</comment>
<comment type="catalytic activity">
    <reaction evidence="4">
        <text>GTP + 4 H2O = 2,5-diamino-6-hydroxy-4-(5-phosphoribosylamino)-pyrimidine + formate + 2 phosphate + 3 H(+)</text>
        <dbReference type="Rhea" id="RHEA:23704"/>
        <dbReference type="ChEBI" id="CHEBI:15377"/>
        <dbReference type="ChEBI" id="CHEBI:15378"/>
        <dbReference type="ChEBI" id="CHEBI:15740"/>
        <dbReference type="ChEBI" id="CHEBI:37565"/>
        <dbReference type="ChEBI" id="CHEBI:43474"/>
        <dbReference type="ChEBI" id="CHEBI:58614"/>
        <dbReference type="EC" id="3.5.4.25"/>
    </reaction>
</comment>
<comment type="cofactor">
    <cofactor evidence="1">
        <name>Zn(2+)</name>
        <dbReference type="ChEBI" id="CHEBI:29105"/>
    </cofactor>
    <text evidence="1">Binds 1 zinc ion per subunit.</text>
</comment>
<comment type="pathway">
    <text>Cofactor biosynthesis; riboflavin biosynthesis; 5-amino-6-(D-ribitylamino)uracil from GTP: step 1/4.</text>
</comment>
<comment type="subcellular location">
    <subcellularLocation>
        <location evidence="4">Plastid</location>
        <location evidence="4">Chloroplast</location>
    </subcellularLocation>
</comment>
<comment type="alternative products">
    <event type="alternative splicing"/>
    <isoform>
        <id>Q9FN89-1</id>
        <name>1</name>
        <sequence type="displayed"/>
    </isoform>
    <text>A number of isoforms are produced.</text>
</comment>
<comment type="tissue specificity">
    <text evidence="4">Expressed in leaves, shoots, roots, flowers and siliques.</text>
</comment>
<comment type="similarity">
    <text evidence="5">In the N-terminal section; belongs to the DHBP synthase family.</text>
</comment>
<comment type="similarity">
    <text evidence="5">In the C-terminal section; belongs to the GTP cyclohydrolase II family.</text>
</comment>
<comment type="caution">
    <text evidence="5">The substrate-binding sites for the inactive DHBP synthase activity are conserved while several cofactor-binding sites are lost.</text>
</comment>
<keyword id="KW-0025">Alternative splicing</keyword>
<keyword id="KW-0150">Chloroplast</keyword>
<keyword id="KW-0342">GTP-binding</keyword>
<keyword id="KW-0378">Hydrolase</keyword>
<keyword id="KW-0479">Metal-binding</keyword>
<keyword id="KW-0547">Nucleotide-binding</keyword>
<keyword id="KW-0934">Plastid</keyword>
<keyword id="KW-1185">Reference proteome</keyword>
<keyword id="KW-0686">Riboflavin biosynthesis</keyword>
<keyword id="KW-0809">Transit peptide</keyword>
<keyword id="KW-0862">Zinc</keyword>
<sequence length="509" mass="56146">MMDSALYHPRIFFAHSFINGLYSSPRFANTCWRLVSRSSWEIKASENSDRNVFDENPVRKTDGSLFDSASFETVDAEITPETDDFFVSDAEGDPDCPTQGYSSIELALQALRKGKFVIVVDDETGDVEGNLIMAATLTSPKDIAFLIKNGSGIVSVGMKKENLERLSLTLMSPEMEDEDSSAPTFTITVDAKSGTSTGVSASDRAMTVLALSSLDAKPDDFRRPGHVFPLKYRDGGVLRRAGHTEASVDLMILAGLRPLSVLSAILDQEDGSMASLPYMKKLATEHDIPIVSLTDLIRYRRKRDKLVERITVSRLPTKWGLFQAYCYRSKLDGTENIALVKGNVGNGEDILVRVHSECLTGDIFGSARCDCGNQLDLAMELIEKEGRGVVVYLRGHEGRGIGLGHKLRAYNLQDEGHDTVQANVELGLSIDSREYGIGAQMLRDIGVRTMRLMTNNPAKFTGLKGYGLAVVGRVPVVTPITKENRRYMETKRKKMGHIYISDNNDQPLA</sequence>